<sequence>MKFLFDLLPIVLFFVAFKVAEGQPDAAAAFASQHFGFLVSGGMVGPKEAPVLLATLVVIVATFAQIGWLLLRGRKVDTMLWVSLGLVTVLGGATVWFHNETFIKWKPSVLYWVMGTAFWLSHAVFRKNLLQTLMGGQLQLPPAVWRNLNFMWIAFFAFMGLANLYVAYSFPTDVWVNFKLFGGVGLMLLFTLAQGLYLSRHIKTEDE</sequence>
<feature type="chain" id="PRO_1000021030" description="Inner membrane-spanning protein YciB">
    <location>
        <begin position="1"/>
        <end position="207"/>
    </location>
</feature>
<feature type="transmembrane region" description="Helical" evidence="1">
    <location>
        <begin position="3"/>
        <end position="23"/>
    </location>
</feature>
<feature type="transmembrane region" description="Helical" evidence="1">
    <location>
        <begin position="51"/>
        <end position="71"/>
    </location>
</feature>
<feature type="transmembrane region" description="Helical" evidence="1">
    <location>
        <begin position="78"/>
        <end position="98"/>
    </location>
</feature>
<feature type="transmembrane region" description="Helical" evidence="1">
    <location>
        <begin position="105"/>
        <end position="125"/>
    </location>
</feature>
<feature type="transmembrane region" description="Helical" evidence="1">
    <location>
        <begin position="150"/>
        <end position="170"/>
    </location>
</feature>
<feature type="transmembrane region" description="Helical" evidence="1">
    <location>
        <begin position="178"/>
        <end position="198"/>
    </location>
</feature>
<accession>A2SGN6</accession>
<proteinExistence type="inferred from homology"/>
<comment type="function">
    <text evidence="1">Plays a role in cell envelope biogenesis, maintenance of cell envelope integrity and membrane homeostasis.</text>
</comment>
<comment type="subcellular location">
    <subcellularLocation>
        <location evidence="1">Cell inner membrane</location>
        <topology evidence="1">Multi-pass membrane protein</topology>
    </subcellularLocation>
</comment>
<comment type="similarity">
    <text evidence="1">Belongs to the YciB family.</text>
</comment>
<name>YCIB_METPP</name>
<keyword id="KW-0997">Cell inner membrane</keyword>
<keyword id="KW-1003">Cell membrane</keyword>
<keyword id="KW-0472">Membrane</keyword>
<keyword id="KW-1185">Reference proteome</keyword>
<keyword id="KW-0812">Transmembrane</keyword>
<keyword id="KW-1133">Transmembrane helix</keyword>
<gene>
    <name evidence="1" type="primary">yciB</name>
    <name type="ordered locus">Mpe_A1766</name>
</gene>
<dbReference type="EMBL" id="CP000555">
    <property type="protein sequence ID" value="ABM94725.1"/>
    <property type="molecule type" value="Genomic_DNA"/>
</dbReference>
<dbReference type="RefSeq" id="WP_011829362.1">
    <property type="nucleotide sequence ID" value="NC_008825.1"/>
</dbReference>
<dbReference type="STRING" id="420662.Mpe_A1766"/>
<dbReference type="KEGG" id="mpt:Mpe_A1766"/>
<dbReference type="eggNOG" id="COG2917">
    <property type="taxonomic scope" value="Bacteria"/>
</dbReference>
<dbReference type="HOGENOM" id="CLU_089554_2_0_4"/>
<dbReference type="Proteomes" id="UP000000366">
    <property type="component" value="Chromosome"/>
</dbReference>
<dbReference type="GO" id="GO:0005886">
    <property type="term" value="C:plasma membrane"/>
    <property type="evidence" value="ECO:0007669"/>
    <property type="project" value="UniProtKB-SubCell"/>
</dbReference>
<dbReference type="HAMAP" id="MF_00189">
    <property type="entry name" value="YciB"/>
    <property type="match status" value="1"/>
</dbReference>
<dbReference type="InterPro" id="IPR006008">
    <property type="entry name" value="YciB"/>
</dbReference>
<dbReference type="NCBIfam" id="NF001325">
    <property type="entry name" value="PRK00259.1-3"/>
    <property type="match status" value="1"/>
</dbReference>
<dbReference type="PANTHER" id="PTHR36917:SF1">
    <property type="entry name" value="INNER MEMBRANE-SPANNING PROTEIN YCIB"/>
    <property type="match status" value="1"/>
</dbReference>
<dbReference type="PANTHER" id="PTHR36917">
    <property type="entry name" value="INTRACELLULAR SEPTATION PROTEIN A-RELATED"/>
    <property type="match status" value="1"/>
</dbReference>
<dbReference type="Pfam" id="PF04279">
    <property type="entry name" value="IspA"/>
    <property type="match status" value="1"/>
</dbReference>
<evidence type="ECO:0000255" key="1">
    <source>
        <dbReference type="HAMAP-Rule" id="MF_00189"/>
    </source>
</evidence>
<protein>
    <recommendedName>
        <fullName evidence="1">Inner membrane-spanning protein YciB</fullName>
    </recommendedName>
</protein>
<organism>
    <name type="scientific">Methylibium petroleiphilum (strain ATCC BAA-1232 / LMG 22953 / PM1)</name>
    <dbReference type="NCBI Taxonomy" id="420662"/>
    <lineage>
        <taxon>Bacteria</taxon>
        <taxon>Pseudomonadati</taxon>
        <taxon>Pseudomonadota</taxon>
        <taxon>Betaproteobacteria</taxon>
        <taxon>Burkholderiales</taxon>
        <taxon>Sphaerotilaceae</taxon>
        <taxon>Methylibium</taxon>
    </lineage>
</organism>
<reference key="1">
    <citation type="journal article" date="2007" name="J. Bacteriol.">
        <title>Whole-genome analysis of the methyl tert-butyl ether-degrading beta-proteobacterium Methylibium petroleiphilum PM1.</title>
        <authorList>
            <person name="Kane S.R."/>
            <person name="Chakicherla A.Y."/>
            <person name="Chain P.S.G."/>
            <person name="Schmidt R."/>
            <person name="Shin M.W."/>
            <person name="Legler T.C."/>
            <person name="Scow K.M."/>
            <person name="Larimer F.W."/>
            <person name="Lucas S.M."/>
            <person name="Richardson P.M."/>
            <person name="Hristova K.R."/>
        </authorList>
    </citation>
    <scope>NUCLEOTIDE SEQUENCE [LARGE SCALE GENOMIC DNA]</scope>
    <source>
        <strain>ATCC BAA-1232 / LMG 22953 / PM1</strain>
    </source>
</reference>